<feature type="chain" id="PRO_1000052666" description="Large ribosomal subunit protein uL22">
    <location>
        <begin position="1"/>
        <end position="114"/>
    </location>
</feature>
<sequence>MAEITSAKATARTVRVSPRKSRLVLDNIRGKSVADAIAILKFTPNKAAGIIEGVLNSAIANAENNFGLEKANLVVSEAFANEGPTLKRFRPRAKGSASPINKRTAHITVVVAEK</sequence>
<organism>
    <name type="scientific">Streptococcus suis (strain 98HAH33)</name>
    <dbReference type="NCBI Taxonomy" id="391296"/>
    <lineage>
        <taxon>Bacteria</taxon>
        <taxon>Bacillati</taxon>
        <taxon>Bacillota</taxon>
        <taxon>Bacilli</taxon>
        <taxon>Lactobacillales</taxon>
        <taxon>Streptococcaceae</taxon>
        <taxon>Streptococcus</taxon>
    </lineage>
</organism>
<keyword id="KW-0687">Ribonucleoprotein</keyword>
<keyword id="KW-0689">Ribosomal protein</keyword>
<keyword id="KW-0694">RNA-binding</keyword>
<keyword id="KW-0699">rRNA-binding</keyword>
<name>RL22_STRS2</name>
<dbReference type="EMBL" id="CP000408">
    <property type="protein sequence ID" value="ABP91237.1"/>
    <property type="molecule type" value="Genomic_DNA"/>
</dbReference>
<dbReference type="SMR" id="A4VYP8"/>
<dbReference type="KEGG" id="ssv:SSU98_0077"/>
<dbReference type="HOGENOM" id="CLU_083987_3_3_9"/>
<dbReference type="GO" id="GO:0022625">
    <property type="term" value="C:cytosolic large ribosomal subunit"/>
    <property type="evidence" value="ECO:0007669"/>
    <property type="project" value="TreeGrafter"/>
</dbReference>
<dbReference type="GO" id="GO:0019843">
    <property type="term" value="F:rRNA binding"/>
    <property type="evidence" value="ECO:0007669"/>
    <property type="project" value="UniProtKB-UniRule"/>
</dbReference>
<dbReference type="GO" id="GO:0003735">
    <property type="term" value="F:structural constituent of ribosome"/>
    <property type="evidence" value="ECO:0007669"/>
    <property type="project" value="InterPro"/>
</dbReference>
<dbReference type="GO" id="GO:0006412">
    <property type="term" value="P:translation"/>
    <property type="evidence" value="ECO:0007669"/>
    <property type="project" value="UniProtKB-UniRule"/>
</dbReference>
<dbReference type="CDD" id="cd00336">
    <property type="entry name" value="Ribosomal_L22"/>
    <property type="match status" value="1"/>
</dbReference>
<dbReference type="FunFam" id="3.90.470.10:FF:000001">
    <property type="entry name" value="50S ribosomal protein L22"/>
    <property type="match status" value="1"/>
</dbReference>
<dbReference type="Gene3D" id="3.90.470.10">
    <property type="entry name" value="Ribosomal protein L22/L17"/>
    <property type="match status" value="1"/>
</dbReference>
<dbReference type="HAMAP" id="MF_01331_B">
    <property type="entry name" value="Ribosomal_uL22_B"/>
    <property type="match status" value="1"/>
</dbReference>
<dbReference type="InterPro" id="IPR001063">
    <property type="entry name" value="Ribosomal_uL22"/>
</dbReference>
<dbReference type="InterPro" id="IPR005727">
    <property type="entry name" value="Ribosomal_uL22_bac/chlpt-type"/>
</dbReference>
<dbReference type="InterPro" id="IPR047867">
    <property type="entry name" value="Ribosomal_uL22_bac/org-type"/>
</dbReference>
<dbReference type="InterPro" id="IPR018260">
    <property type="entry name" value="Ribosomal_uL22_CS"/>
</dbReference>
<dbReference type="InterPro" id="IPR036394">
    <property type="entry name" value="Ribosomal_uL22_sf"/>
</dbReference>
<dbReference type="NCBIfam" id="TIGR01044">
    <property type="entry name" value="rplV_bact"/>
    <property type="match status" value="1"/>
</dbReference>
<dbReference type="PANTHER" id="PTHR13501">
    <property type="entry name" value="CHLOROPLAST 50S RIBOSOMAL PROTEIN L22-RELATED"/>
    <property type="match status" value="1"/>
</dbReference>
<dbReference type="PANTHER" id="PTHR13501:SF8">
    <property type="entry name" value="LARGE RIBOSOMAL SUBUNIT PROTEIN UL22M"/>
    <property type="match status" value="1"/>
</dbReference>
<dbReference type="Pfam" id="PF00237">
    <property type="entry name" value="Ribosomal_L22"/>
    <property type="match status" value="1"/>
</dbReference>
<dbReference type="SUPFAM" id="SSF54843">
    <property type="entry name" value="Ribosomal protein L22"/>
    <property type="match status" value="1"/>
</dbReference>
<dbReference type="PROSITE" id="PS00464">
    <property type="entry name" value="RIBOSOMAL_L22"/>
    <property type="match status" value="1"/>
</dbReference>
<proteinExistence type="inferred from homology"/>
<gene>
    <name evidence="1" type="primary">rplV</name>
    <name type="ordered locus">SSU98_0077</name>
</gene>
<protein>
    <recommendedName>
        <fullName evidence="1">Large ribosomal subunit protein uL22</fullName>
    </recommendedName>
    <alternativeName>
        <fullName evidence="2">50S ribosomal protein L22</fullName>
    </alternativeName>
</protein>
<accession>A4VYP8</accession>
<comment type="function">
    <text evidence="1">This protein binds specifically to 23S rRNA; its binding is stimulated by other ribosomal proteins, e.g. L4, L17, and L20. It is important during the early stages of 50S assembly. It makes multiple contacts with different domains of the 23S rRNA in the assembled 50S subunit and ribosome (By similarity).</text>
</comment>
<comment type="function">
    <text evidence="1">The globular domain of the protein is located near the polypeptide exit tunnel on the outside of the subunit, while an extended beta-hairpin is found that lines the wall of the exit tunnel in the center of the 70S ribosome.</text>
</comment>
<comment type="subunit">
    <text evidence="1">Part of the 50S ribosomal subunit.</text>
</comment>
<comment type="similarity">
    <text evidence="1">Belongs to the universal ribosomal protein uL22 family.</text>
</comment>
<reference key="1">
    <citation type="journal article" date="2007" name="PLoS ONE">
        <title>A glimpse of streptococcal toxic shock syndrome from comparative genomics of S. suis 2 Chinese isolates.</title>
        <authorList>
            <person name="Chen C."/>
            <person name="Tang J."/>
            <person name="Dong W."/>
            <person name="Wang C."/>
            <person name="Feng Y."/>
            <person name="Wang J."/>
            <person name="Zheng F."/>
            <person name="Pan X."/>
            <person name="Liu D."/>
            <person name="Li M."/>
            <person name="Song Y."/>
            <person name="Zhu X."/>
            <person name="Sun H."/>
            <person name="Feng T."/>
            <person name="Guo Z."/>
            <person name="Ju A."/>
            <person name="Ge J."/>
            <person name="Dong Y."/>
            <person name="Sun W."/>
            <person name="Jiang Y."/>
            <person name="Wang J."/>
            <person name="Yan J."/>
            <person name="Yang H."/>
            <person name="Wang X."/>
            <person name="Gao G.F."/>
            <person name="Yang R."/>
            <person name="Wang J."/>
            <person name="Yu J."/>
        </authorList>
    </citation>
    <scope>NUCLEOTIDE SEQUENCE [LARGE SCALE GENOMIC DNA]</scope>
    <source>
        <strain>98HAH33</strain>
    </source>
</reference>
<evidence type="ECO:0000255" key="1">
    <source>
        <dbReference type="HAMAP-Rule" id="MF_01331"/>
    </source>
</evidence>
<evidence type="ECO:0000305" key="2"/>